<organism>
    <name type="scientific">Escherichia coli (strain K12 / DH10B)</name>
    <dbReference type="NCBI Taxonomy" id="316385"/>
    <lineage>
        <taxon>Bacteria</taxon>
        <taxon>Pseudomonadati</taxon>
        <taxon>Pseudomonadota</taxon>
        <taxon>Gammaproteobacteria</taxon>
        <taxon>Enterobacterales</taxon>
        <taxon>Enterobacteriaceae</taxon>
        <taxon>Escherichia</taxon>
    </lineage>
</organism>
<sequence length="206" mass="23469">MARYLGPKLKLSRREGTDLFLKSGVRAIDTKCKIEQAPGQHGARKPRLSDYGVQLREKQKVRRIYGVLERQFRNYYKEAARLKGNTGENLLALLEGRLDNVVYRMGFGATRAEARQLVSHKAIMVNGRVVNIASYQVSPNDVVSIREKAKKQSRVKAALELAEQREKPTWLEVDAGKMEGTFKRKPERSDLSADINEHLIVELYSK</sequence>
<name>RS4_ECODH</name>
<keyword id="KW-0687">Ribonucleoprotein</keyword>
<keyword id="KW-0689">Ribosomal protein</keyword>
<keyword id="KW-0694">RNA-binding</keyword>
<keyword id="KW-0699">rRNA-binding</keyword>
<dbReference type="EMBL" id="CP000948">
    <property type="protein sequence ID" value="ACB04358.1"/>
    <property type="molecule type" value="Genomic_DNA"/>
</dbReference>
<dbReference type="RefSeq" id="WP_000135224.1">
    <property type="nucleotide sequence ID" value="NC_010473.1"/>
</dbReference>
<dbReference type="SMR" id="B1X6E8"/>
<dbReference type="GeneID" id="93778691"/>
<dbReference type="KEGG" id="ecd:ECDH10B_3471"/>
<dbReference type="HOGENOM" id="CLU_092403_0_2_6"/>
<dbReference type="GO" id="GO:0015935">
    <property type="term" value="C:small ribosomal subunit"/>
    <property type="evidence" value="ECO:0007669"/>
    <property type="project" value="InterPro"/>
</dbReference>
<dbReference type="GO" id="GO:0019843">
    <property type="term" value="F:rRNA binding"/>
    <property type="evidence" value="ECO:0007669"/>
    <property type="project" value="UniProtKB-UniRule"/>
</dbReference>
<dbReference type="GO" id="GO:0003735">
    <property type="term" value="F:structural constituent of ribosome"/>
    <property type="evidence" value="ECO:0007669"/>
    <property type="project" value="InterPro"/>
</dbReference>
<dbReference type="GO" id="GO:0042274">
    <property type="term" value="P:ribosomal small subunit biogenesis"/>
    <property type="evidence" value="ECO:0007669"/>
    <property type="project" value="TreeGrafter"/>
</dbReference>
<dbReference type="GO" id="GO:0006412">
    <property type="term" value="P:translation"/>
    <property type="evidence" value="ECO:0007669"/>
    <property type="project" value="UniProtKB-UniRule"/>
</dbReference>
<dbReference type="CDD" id="cd00165">
    <property type="entry name" value="S4"/>
    <property type="match status" value="1"/>
</dbReference>
<dbReference type="FunFam" id="1.10.1050.10:FF:000001">
    <property type="entry name" value="30S ribosomal protein S4"/>
    <property type="match status" value="1"/>
</dbReference>
<dbReference type="FunFam" id="3.10.290.10:FF:000001">
    <property type="entry name" value="30S ribosomal protein S4"/>
    <property type="match status" value="1"/>
</dbReference>
<dbReference type="Gene3D" id="1.10.1050.10">
    <property type="entry name" value="Ribosomal Protein S4 Delta 41, Chain A, domain 1"/>
    <property type="match status" value="1"/>
</dbReference>
<dbReference type="Gene3D" id="3.10.290.10">
    <property type="entry name" value="RNA-binding S4 domain"/>
    <property type="match status" value="1"/>
</dbReference>
<dbReference type="HAMAP" id="MF_01306_B">
    <property type="entry name" value="Ribosomal_uS4_B"/>
    <property type="match status" value="1"/>
</dbReference>
<dbReference type="InterPro" id="IPR022801">
    <property type="entry name" value="Ribosomal_uS4"/>
</dbReference>
<dbReference type="InterPro" id="IPR005709">
    <property type="entry name" value="Ribosomal_uS4_bac-type"/>
</dbReference>
<dbReference type="InterPro" id="IPR018079">
    <property type="entry name" value="Ribosomal_uS4_CS"/>
</dbReference>
<dbReference type="InterPro" id="IPR001912">
    <property type="entry name" value="Ribosomal_uS4_N"/>
</dbReference>
<dbReference type="InterPro" id="IPR002942">
    <property type="entry name" value="S4_RNA-bd"/>
</dbReference>
<dbReference type="InterPro" id="IPR036986">
    <property type="entry name" value="S4_RNA-bd_sf"/>
</dbReference>
<dbReference type="NCBIfam" id="NF003717">
    <property type="entry name" value="PRK05327.1"/>
    <property type="match status" value="1"/>
</dbReference>
<dbReference type="NCBIfam" id="TIGR01017">
    <property type="entry name" value="rpsD_bact"/>
    <property type="match status" value="1"/>
</dbReference>
<dbReference type="PANTHER" id="PTHR11831">
    <property type="entry name" value="30S 40S RIBOSOMAL PROTEIN"/>
    <property type="match status" value="1"/>
</dbReference>
<dbReference type="PANTHER" id="PTHR11831:SF4">
    <property type="entry name" value="SMALL RIBOSOMAL SUBUNIT PROTEIN US4M"/>
    <property type="match status" value="1"/>
</dbReference>
<dbReference type="Pfam" id="PF00163">
    <property type="entry name" value="Ribosomal_S4"/>
    <property type="match status" value="1"/>
</dbReference>
<dbReference type="Pfam" id="PF01479">
    <property type="entry name" value="S4"/>
    <property type="match status" value="1"/>
</dbReference>
<dbReference type="SMART" id="SM01390">
    <property type="entry name" value="Ribosomal_S4"/>
    <property type="match status" value="1"/>
</dbReference>
<dbReference type="SMART" id="SM00363">
    <property type="entry name" value="S4"/>
    <property type="match status" value="1"/>
</dbReference>
<dbReference type="SUPFAM" id="SSF55174">
    <property type="entry name" value="Alpha-L RNA-binding motif"/>
    <property type="match status" value="1"/>
</dbReference>
<dbReference type="PROSITE" id="PS00632">
    <property type="entry name" value="RIBOSOMAL_S4"/>
    <property type="match status" value="1"/>
</dbReference>
<dbReference type="PROSITE" id="PS50889">
    <property type="entry name" value="S4"/>
    <property type="match status" value="1"/>
</dbReference>
<proteinExistence type="inferred from homology"/>
<feature type="chain" id="PRO_1000140728" description="Small ribosomal subunit protein uS4">
    <location>
        <begin position="1"/>
        <end position="206"/>
    </location>
</feature>
<feature type="domain" description="S4 RNA-binding" evidence="1">
    <location>
        <begin position="96"/>
        <end position="156"/>
    </location>
</feature>
<protein>
    <recommendedName>
        <fullName evidence="1">Small ribosomal subunit protein uS4</fullName>
    </recommendedName>
    <alternativeName>
        <fullName evidence="2">30S ribosomal protein S4</fullName>
    </alternativeName>
</protein>
<comment type="function">
    <text evidence="1">One of the primary rRNA binding proteins, it binds directly to 16S rRNA where it nucleates assembly of the body of the 30S subunit.</text>
</comment>
<comment type="function">
    <text evidence="1">With S5 and S12 plays an important role in translational accuracy.</text>
</comment>
<comment type="subunit">
    <text evidence="1">Part of the 30S ribosomal subunit. Contacts protein S5. The interaction surface between S4 and S5 is involved in control of translational fidelity.</text>
</comment>
<comment type="similarity">
    <text evidence="1">Belongs to the universal ribosomal protein uS4 family.</text>
</comment>
<evidence type="ECO:0000255" key="1">
    <source>
        <dbReference type="HAMAP-Rule" id="MF_01306"/>
    </source>
</evidence>
<evidence type="ECO:0000305" key="2"/>
<gene>
    <name evidence="1" type="primary">rpsD</name>
    <name type="ordered locus">ECDH10B_3471</name>
</gene>
<reference key="1">
    <citation type="journal article" date="2008" name="J. Bacteriol.">
        <title>The complete genome sequence of Escherichia coli DH10B: insights into the biology of a laboratory workhorse.</title>
        <authorList>
            <person name="Durfee T."/>
            <person name="Nelson R."/>
            <person name="Baldwin S."/>
            <person name="Plunkett G. III"/>
            <person name="Burland V."/>
            <person name="Mau B."/>
            <person name="Petrosino J.F."/>
            <person name="Qin X."/>
            <person name="Muzny D.M."/>
            <person name="Ayele M."/>
            <person name="Gibbs R.A."/>
            <person name="Csorgo B."/>
            <person name="Posfai G."/>
            <person name="Weinstock G.M."/>
            <person name="Blattner F.R."/>
        </authorList>
    </citation>
    <scope>NUCLEOTIDE SEQUENCE [LARGE SCALE GENOMIC DNA]</scope>
    <source>
        <strain>K12 / DH10B</strain>
    </source>
</reference>
<accession>B1X6E8</accession>